<protein>
    <recommendedName>
        <fullName>Nitric oxide synthase, inducible</fullName>
        <ecNumber evidence="4">1.14.13.39</ecNumber>
    </recommendedName>
    <alternativeName>
        <fullName>Inducible NO synthase</fullName>
        <shortName>Inducible NOS</shortName>
        <shortName>iNOS</shortName>
    </alternativeName>
    <alternativeName>
        <fullName>NOS type II</fullName>
    </alternativeName>
    <alternativeName>
        <fullName>Peptidyl-cysteine S-nitrosylase NOS2</fullName>
    </alternativeName>
</protein>
<sequence length="496" mass="56397">MYPHFCAFVMTSTRNCLTWAASQLAPTGEGDELSGQEDAFRSWAVQTFRAACETFDVRSKHCIQIPKRYTSNATWEPEQYKLTQSPEPLDLNKALSSIHAKNLFTMRLRSLQNLHSEKSSRTTLLVQLTFEGSRGPSYLPGEHLGIFPGNQTGLVQGILERVVDCSSPDQTVCLEVHDESGSYWVKDKRLPPCSLRQALTYFLDITTPPTQLQLHKLARFATEETHRQRLEALCQPSEYNDWKFSNNPTFLEVLEEFPSLRVPAAFLLSQLPILKPRYYSISSSQDHTPSEVHLTVAVVTYRTRDGQGPLHHGVCSTWINNLKPEDPVPCFVRSVSGFQLPEDPSQPCILIGPGTGIAPFRSFWQQRLHDSQHRGLKGGRMTLVFGCRHPEEDHLYQEEMQEMVRKGVLFQVHTGYSRLPGKPKVYVQDILQKELADEVFSVLHGEQGHLYVCGDVRMARDVATTLKKLVAAKLNLSEEQVEDYFFQLKYHEDIFG</sequence>
<evidence type="ECO:0000250" key="1"/>
<evidence type="ECO:0000250" key="2">
    <source>
        <dbReference type="UniProtKB" id="P29476"/>
    </source>
</evidence>
<evidence type="ECO:0000250" key="3">
    <source>
        <dbReference type="UniProtKB" id="P29477"/>
    </source>
</evidence>
<evidence type="ECO:0000250" key="4">
    <source>
        <dbReference type="UniProtKB" id="P35228"/>
    </source>
</evidence>
<evidence type="ECO:0000255" key="5">
    <source>
        <dbReference type="PROSITE-ProRule" id="PRU00716"/>
    </source>
</evidence>
<evidence type="ECO:0000305" key="6"/>
<reference key="1">
    <citation type="submission" date="1997-01" db="EMBL/GenBank/DDBJ databases">
        <title>Rabbit iducible nitric oxide synthase gene-NOS II.</title>
        <authorList>
            <person name="Broner C.W."/>
            <person name="Eledath F.M."/>
        </authorList>
    </citation>
    <scope>NUCLEOTIDE SEQUENCE [MRNA]</scope>
    <source>
        <strain>New Zealand white</strain>
        <tissue>Heart</tissue>
    </source>
</reference>
<proteinExistence type="evidence at transcript level"/>
<feature type="chain" id="PRO_0000170936" description="Nitric oxide synthase, inducible">
    <location>
        <begin position="1" status="less than"/>
        <end position="496" status="greater than"/>
    </location>
</feature>
<feature type="domain" description="FAD-binding FR-type" evidence="5">
    <location>
        <begin position="101"/>
        <end position="341"/>
    </location>
</feature>
<feature type="binding site" evidence="4">
    <location>
        <position position="6"/>
    </location>
    <ligand>
        <name>FMN</name>
        <dbReference type="ChEBI" id="CHEBI:58210"/>
    </ligand>
</feature>
<feature type="binding site" evidence="4">
    <location>
        <position position="32"/>
    </location>
    <ligand>
        <name>FMN</name>
        <dbReference type="ChEBI" id="CHEBI:58210"/>
    </ligand>
</feature>
<feature type="binding site" evidence="4">
    <location>
        <position position="36"/>
    </location>
    <ligand>
        <name>FMN</name>
        <dbReference type="ChEBI" id="CHEBI:58210"/>
    </ligand>
</feature>
<feature type="binding site" evidence="2">
    <location>
        <position position="121"/>
    </location>
    <ligand>
        <name>NADP(+)</name>
        <dbReference type="ChEBI" id="CHEBI:58349"/>
    </ligand>
</feature>
<feature type="binding site" evidence="2">
    <location>
        <position position="143"/>
    </location>
    <ligand>
        <name>FAD</name>
        <dbReference type="ChEBI" id="CHEBI:57692"/>
    </ligand>
</feature>
<feature type="binding site" evidence="2">
    <location>
        <position position="277"/>
    </location>
    <ligand>
        <name>FAD</name>
        <dbReference type="ChEBI" id="CHEBI:57692"/>
    </ligand>
</feature>
<feature type="binding site" evidence="2">
    <location>
        <position position="279"/>
    </location>
    <ligand>
        <name>FAD</name>
        <dbReference type="ChEBI" id="CHEBI:57692"/>
    </ligand>
</feature>
<feature type="binding site" evidence="2">
    <location>
        <position position="280"/>
    </location>
    <ligand>
        <name>FAD</name>
        <dbReference type="ChEBI" id="CHEBI:57692"/>
    </ligand>
</feature>
<feature type="binding site" evidence="2">
    <location>
        <position position="295"/>
    </location>
    <ligand>
        <name>FAD</name>
        <dbReference type="ChEBI" id="CHEBI:57692"/>
    </ligand>
</feature>
<feature type="binding site" evidence="2">
    <location>
        <position position="297"/>
    </location>
    <ligand>
        <name>FAD</name>
        <dbReference type="ChEBI" id="CHEBI:57692"/>
    </ligand>
</feature>
<feature type="binding site" evidence="2">
    <location>
        <position position="300"/>
    </location>
    <ligand>
        <name>NADP(+)</name>
        <dbReference type="ChEBI" id="CHEBI:58349"/>
    </ligand>
</feature>
<feature type="binding site" evidence="2">
    <location>
        <position position="301"/>
    </location>
    <ligand>
        <name>FAD</name>
        <dbReference type="ChEBI" id="CHEBI:57692"/>
    </ligand>
</feature>
<feature type="binding site" evidence="2">
    <location>
        <position position="314"/>
    </location>
    <ligand>
        <name>FAD</name>
        <dbReference type="ChEBI" id="CHEBI:57692"/>
    </ligand>
</feature>
<feature type="binding site" evidence="2">
    <location>
        <position position="315"/>
    </location>
    <ligand>
        <name>FAD</name>
        <dbReference type="ChEBI" id="CHEBI:57692"/>
    </ligand>
</feature>
<feature type="binding site" evidence="2">
    <location>
        <position position="316"/>
    </location>
    <ligand>
        <name>FAD</name>
        <dbReference type="ChEBI" id="CHEBI:57692"/>
    </ligand>
</feature>
<feature type="binding site" evidence="2">
    <location>
        <position position="355"/>
    </location>
    <ligand>
        <name>NADP(+)</name>
        <dbReference type="ChEBI" id="CHEBI:58349"/>
    </ligand>
</feature>
<feature type="binding site" evidence="2">
    <location>
        <position position="388"/>
    </location>
    <ligand>
        <name>NADP(+)</name>
        <dbReference type="ChEBI" id="CHEBI:58349"/>
    </ligand>
</feature>
<feature type="binding site" evidence="2">
    <location>
        <position position="417"/>
    </location>
    <ligand>
        <name>NADP(+)</name>
        <dbReference type="ChEBI" id="CHEBI:58349"/>
    </ligand>
</feature>
<feature type="binding site" evidence="2">
    <location>
        <position position="418"/>
    </location>
    <ligand>
        <name>NADP(+)</name>
        <dbReference type="ChEBI" id="CHEBI:58349"/>
    </ligand>
</feature>
<feature type="binding site" evidence="2">
    <location>
        <position position="424"/>
    </location>
    <ligand>
        <name>NADP(+)</name>
        <dbReference type="ChEBI" id="CHEBI:58349"/>
    </ligand>
</feature>
<feature type="binding site" evidence="2">
    <location>
        <position position="426"/>
    </location>
    <ligand>
        <name>NADP(+)</name>
        <dbReference type="ChEBI" id="CHEBI:58349"/>
    </ligand>
</feature>
<feature type="binding site" evidence="2">
    <location>
        <position position="428"/>
    </location>
    <ligand>
        <name>NADP(+)</name>
        <dbReference type="ChEBI" id="CHEBI:58349"/>
    </ligand>
</feature>
<feature type="binding site" evidence="2">
    <location>
        <position position="461"/>
    </location>
    <ligand>
        <name>NADP(+)</name>
        <dbReference type="ChEBI" id="CHEBI:58349"/>
    </ligand>
</feature>
<feature type="non-terminal residue">
    <location>
        <position position="1"/>
    </location>
</feature>
<feature type="non-terminal residue">
    <location>
        <position position="496"/>
    </location>
</feature>
<dbReference type="EC" id="1.14.13.39" evidence="4"/>
<dbReference type="EMBL" id="U85094">
    <property type="protein sequence ID" value="AAB65618.1"/>
    <property type="molecule type" value="mRNA"/>
</dbReference>
<dbReference type="SMR" id="O19114"/>
<dbReference type="STRING" id="9986.ENSOCUP00000001643"/>
<dbReference type="InParanoid" id="O19114"/>
<dbReference type="Proteomes" id="UP000001811">
    <property type="component" value="Unplaced"/>
</dbReference>
<dbReference type="GO" id="GO:0005829">
    <property type="term" value="C:cytosol"/>
    <property type="evidence" value="ECO:0007669"/>
    <property type="project" value="UniProtKB-SubCell"/>
</dbReference>
<dbReference type="GO" id="GO:0005516">
    <property type="term" value="F:calmodulin binding"/>
    <property type="evidence" value="ECO:0007669"/>
    <property type="project" value="UniProtKB-KW"/>
</dbReference>
<dbReference type="GO" id="GO:0046872">
    <property type="term" value="F:metal ion binding"/>
    <property type="evidence" value="ECO:0007669"/>
    <property type="project" value="UniProtKB-KW"/>
</dbReference>
<dbReference type="GO" id="GO:0004517">
    <property type="term" value="F:nitric-oxide synthase activity"/>
    <property type="evidence" value="ECO:0000250"/>
    <property type="project" value="UniProtKB"/>
</dbReference>
<dbReference type="GO" id="GO:0018119">
    <property type="term" value="P:peptidyl-cysteine S-nitrosylation"/>
    <property type="evidence" value="ECO:0000250"/>
    <property type="project" value="UniProtKB"/>
</dbReference>
<dbReference type="GO" id="GO:0032755">
    <property type="term" value="P:positive regulation of interleukin-6 production"/>
    <property type="evidence" value="ECO:0000250"/>
    <property type="project" value="UniProtKB"/>
</dbReference>
<dbReference type="GO" id="GO:0032757">
    <property type="term" value="P:positive regulation of interleukin-8 production"/>
    <property type="evidence" value="ECO:0000250"/>
    <property type="project" value="UniProtKB"/>
</dbReference>
<dbReference type="GO" id="GO:0032310">
    <property type="term" value="P:prostaglandin secretion"/>
    <property type="evidence" value="ECO:0000250"/>
    <property type="project" value="UniProtKB"/>
</dbReference>
<dbReference type="GO" id="GO:1900015">
    <property type="term" value="P:regulation of cytokine production involved in inflammatory response"/>
    <property type="evidence" value="ECO:0000250"/>
    <property type="project" value="UniProtKB"/>
</dbReference>
<dbReference type="FunFam" id="1.20.990.10:FF:000006">
    <property type="entry name" value="Nitric oxide synthase"/>
    <property type="match status" value="1"/>
</dbReference>
<dbReference type="FunFam" id="3.40.50.80:FF:000003">
    <property type="entry name" value="Nitric oxide synthase"/>
    <property type="match status" value="1"/>
</dbReference>
<dbReference type="Gene3D" id="3.40.50.360">
    <property type="match status" value="1"/>
</dbReference>
<dbReference type="Gene3D" id="1.20.990.10">
    <property type="entry name" value="NADPH-cytochrome p450 Reductase, Chain A, domain 3"/>
    <property type="match status" value="1"/>
</dbReference>
<dbReference type="Gene3D" id="3.40.50.80">
    <property type="entry name" value="Nucleotide-binding domain of ferredoxin-NADP reductase (FNR) module"/>
    <property type="match status" value="1"/>
</dbReference>
<dbReference type="Gene3D" id="2.40.30.10">
    <property type="entry name" value="Translation factors"/>
    <property type="match status" value="1"/>
</dbReference>
<dbReference type="InterPro" id="IPR003097">
    <property type="entry name" value="CysJ-like_FAD-binding"/>
</dbReference>
<dbReference type="InterPro" id="IPR017927">
    <property type="entry name" value="FAD-bd_FR_type"/>
</dbReference>
<dbReference type="InterPro" id="IPR001709">
    <property type="entry name" value="Flavoprot_Pyr_Nucl_cyt_Rdtase"/>
</dbReference>
<dbReference type="InterPro" id="IPR029039">
    <property type="entry name" value="Flavoprotein-like_sf"/>
</dbReference>
<dbReference type="InterPro" id="IPR039261">
    <property type="entry name" value="FNR_nucleotide-bd"/>
</dbReference>
<dbReference type="InterPro" id="IPR023173">
    <property type="entry name" value="NADPH_Cyt_P450_Rdtase_alpha"/>
</dbReference>
<dbReference type="InterPro" id="IPR050607">
    <property type="entry name" value="NOS"/>
</dbReference>
<dbReference type="InterPro" id="IPR001433">
    <property type="entry name" value="OxRdtase_FAD/NAD-bd"/>
</dbReference>
<dbReference type="InterPro" id="IPR017938">
    <property type="entry name" value="Riboflavin_synthase-like_b-brl"/>
</dbReference>
<dbReference type="PANTHER" id="PTHR43410:SF4">
    <property type="entry name" value="NITRIC OXIDE SYNTHASE"/>
    <property type="match status" value="1"/>
</dbReference>
<dbReference type="PANTHER" id="PTHR43410">
    <property type="entry name" value="NITRIC OXIDE SYNTHASE OXYGENASE"/>
    <property type="match status" value="1"/>
</dbReference>
<dbReference type="Pfam" id="PF00667">
    <property type="entry name" value="FAD_binding_1"/>
    <property type="match status" value="1"/>
</dbReference>
<dbReference type="Pfam" id="PF00175">
    <property type="entry name" value="NAD_binding_1"/>
    <property type="match status" value="1"/>
</dbReference>
<dbReference type="PRINTS" id="PR00371">
    <property type="entry name" value="FPNCR"/>
</dbReference>
<dbReference type="SUPFAM" id="SSF52343">
    <property type="entry name" value="Ferredoxin reductase-like, C-terminal NADP-linked domain"/>
    <property type="match status" value="1"/>
</dbReference>
<dbReference type="SUPFAM" id="SSF52218">
    <property type="entry name" value="Flavoproteins"/>
    <property type="match status" value="1"/>
</dbReference>
<dbReference type="SUPFAM" id="SSF63380">
    <property type="entry name" value="Riboflavin synthase domain-like"/>
    <property type="match status" value="1"/>
</dbReference>
<dbReference type="PROSITE" id="PS51384">
    <property type="entry name" value="FAD_FR"/>
    <property type="match status" value="1"/>
</dbReference>
<comment type="function">
    <text evidence="3 4">Produces nitric oxide (NO) which is a messenger molecule with diverse functions throughout the body. In macrophages, NO mediates tumoricidal and bactericidal actions. Also has nitrosylase activity and mediates cysteine S-nitrosylation of cytoplasmic target proteins such PTGS2/COX2. As component of the iNOS-S100A8/9 transnitrosylase complex involved in the selective inflammatory stimulus-dependent S-nitrosylation of GAPDH implicated in regulation of the GAIT complex activity and probably multiple targets including ANXA5, EZR, MSN and VIM. Involved in inflammation, enhances the synthesis of pro-inflammatory mediators such as IL6 and IL8.</text>
</comment>
<comment type="catalytic activity">
    <reaction evidence="4">
        <text>2 L-arginine + 3 NADPH + 4 O2 + H(+) = 2 L-citrulline + 2 nitric oxide + 3 NADP(+) + 4 H2O</text>
        <dbReference type="Rhea" id="RHEA:19897"/>
        <dbReference type="ChEBI" id="CHEBI:15377"/>
        <dbReference type="ChEBI" id="CHEBI:15378"/>
        <dbReference type="ChEBI" id="CHEBI:15379"/>
        <dbReference type="ChEBI" id="CHEBI:16480"/>
        <dbReference type="ChEBI" id="CHEBI:32682"/>
        <dbReference type="ChEBI" id="CHEBI:57743"/>
        <dbReference type="ChEBI" id="CHEBI:57783"/>
        <dbReference type="ChEBI" id="CHEBI:58349"/>
        <dbReference type="EC" id="1.14.13.39"/>
    </reaction>
    <physiologicalReaction direction="left-to-right" evidence="4">
        <dbReference type="Rhea" id="RHEA:19898"/>
    </physiologicalReaction>
</comment>
<comment type="cofactor">
    <cofactor evidence="4">
        <name>heme b</name>
        <dbReference type="ChEBI" id="CHEBI:60344"/>
    </cofactor>
</comment>
<comment type="cofactor">
    <cofactor evidence="2">
        <name>FAD</name>
        <dbReference type="ChEBI" id="CHEBI:57692"/>
    </cofactor>
    <text evidence="2">Binds 1 FAD.</text>
</comment>
<comment type="cofactor">
    <cofactor evidence="4">
        <name>FMN</name>
        <dbReference type="ChEBI" id="CHEBI:58210"/>
    </cofactor>
    <text evidence="4">Binds 1 FMN.</text>
</comment>
<comment type="cofactor">
    <cofactor evidence="4">
        <name>(6R)-L-erythro-5,6,7,8-tetrahydrobiopterin</name>
        <dbReference type="ChEBI" id="CHEBI:59560"/>
    </cofactor>
    <text evidence="4">Tetrahydrobiopterin (BH4). May stabilize the dimeric form of the enzyme.</text>
</comment>
<comment type="activity regulation">
    <text evidence="1">Not stimulated by calcium/calmodulin.</text>
</comment>
<comment type="subunit">
    <text evidence="3">Homodimer. Interacts with NHERF1. Interacts with GAPDH; induced by oxidatively-modified low-densitity lipoprotein (LDL(ox)). Interacts with S100A8 and S100A9 to form the iNOS-S100A8/9 transnitrosylase complex. Interacts with SPSB1, SPSB2 and SPSB4. Interacts with ELOC and CUL5 in the presence of SPSB1 or SPSB2 or SPSB4. Forms a complex with ASL, ASS1 and HSP90AA1; the complex regulates cell-autonomous L-arginine synthesis and citrulline recycling while channeling extracellular L-arginine to nitric oxide synthesis pathway.</text>
</comment>
<comment type="subcellular location">
    <subcellularLocation>
        <location evidence="4">Cytoplasm</location>
        <location evidence="4">Cytosol</location>
    </subcellularLocation>
    <text evidence="4">Localizes as discrete foci scattered throughout the cytosol and in the presence of SPSB1 and SPSB4, exhibits a more diffuse cytosolic localization.</text>
</comment>
<comment type="PTM">
    <text evidence="4">Polyubiquitinated; mediated by SPSB1, SPSB2 and SPSB4, leading to proteasomal degradation.</text>
</comment>
<comment type="similarity">
    <text evidence="6">Belongs to the NOS family.</text>
</comment>
<gene>
    <name type="primary">NOS2</name>
</gene>
<name>NOS2_RABIT</name>
<organism>
    <name type="scientific">Oryctolagus cuniculus</name>
    <name type="common">Rabbit</name>
    <dbReference type="NCBI Taxonomy" id="9986"/>
    <lineage>
        <taxon>Eukaryota</taxon>
        <taxon>Metazoa</taxon>
        <taxon>Chordata</taxon>
        <taxon>Craniata</taxon>
        <taxon>Vertebrata</taxon>
        <taxon>Euteleostomi</taxon>
        <taxon>Mammalia</taxon>
        <taxon>Eutheria</taxon>
        <taxon>Euarchontoglires</taxon>
        <taxon>Glires</taxon>
        <taxon>Lagomorpha</taxon>
        <taxon>Leporidae</taxon>
        <taxon>Oryctolagus</taxon>
    </lineage>
</organism>
<keyword id="KW-0112">Calmodulin-binding</keyword>
<keyword id="KW-0963">Cytoplasm</keyword>
<keyword id="KW-0274">FAD</keyword>
<keyword id="KW-0285">Flavoprotein</keyword>
<keyword id="KW-0288">FMN</keyword>
<keyword id="KW-0349">Heme</keyword>
<keyword id="KW-0408">Iron</keyword>
<keyword id="KW-0479">Metal-binding</keyword>
<keyword id="KW-0521">NADP</keyword>
<keyword id="KW-0560">Oxidoreductase</keyword>
<keyword id="KW-1185">Reference proteome</keyword>
<keyword id="KW-0832">Ubl conjugation</keyword>
<accession>O19114</accession>